<proteinExistence type="evidence at protein level"/>
<name>SLN12_HUMAN</name>
<feature type="chain" id="PRO_0000282984" description="Ribonuclease SLFN12">
    <location>
        <begin position="1"/>
        <end position="578"/>
    </location>
</feature>
<feature type="region of interest" description="Mediates interaction with PDE3A" evidence="4">
    <location>
        <begin position="551"/>
        <end position="560"/>
    </location>
</feature>
<feature type="modified residue" description="Phosphoserine" evidence="6">
    <location>
        <position position="368"/>
    </location>
</feature>
<feature type="modified residue" description="Phosphoserine" evidence="6">
    <location>
        <position position="573"/>
    </location>
</feature>
<feature type="sequence variant" id="VAR_031447" description="In dbSNP:rs1849733." evidence="1">
    <original>S</original>
    <variation>R</variation>
    <location>
        <position position="43"/>
    </location>
</feature>
<feature type="sequence variant" id="VAR_031448" description="In dbSNP:rs2586514." evidence="1">
    <original>C</original>
    <variation>R</variation>
    <location>
        <position position="168"/>
    </location>
</feature>
<feature type="sequence variant" id="VAR_053877" description="In dbSNP:rs12946189.">
    <original>S</original>
    <variation>P</variation>
    <location>
        <position position="448"/>
    </location>
</feature>
<feature type="mutagenesis site" description="Decreased ribosomal RNA ribonuclease activity." evidence="4">
    <original>E</original>
    <variation>A</variation>
    <location>
        <position position="200"/>
    </location>
</feature>
<feature type="mutagenesis site" description="Decreased ribosomal RNA ribonuclease activity." evidence="4">
    <original>E</original>
    <variation>A</variation>
    <location>
        <position position="205"/>
    </location>
</feature>
<feature type="mutagenesis site" description="Loss of function in the E2-induced apoptotic signaling pathway." evidence="3">
    <original>K</original>
    <variation>R</variation>
    <location>
        <position position="213"/>
    </location>
</feature>
<feature type="mutagenesis site" description="Loss of interaction with SERPINB2." evidence="2">
    <original>D</original>
    <variation>Q</variation>
    <location>
        <position position="233"/>
    </location>
</feature>
<feature type="mutagenesis site" description="Increased ribonuclease activity; when associated with A-573." evidence="6">
    <original>S</original>
    <variation>A</variation>
    <location>
        <position position="368"/>
    </location>
</feature>
<feature type="mutagenesis site" description="Decreased ribonuclease activity; when associated with E-573." evidence="6">
    <original>S</original>
    <variation>E</variation>
    <location>
        <position position="368"/>
    </location>
</feature>
<feature type="mutagenesis site" description="Increased ribonuclease activity; when associated with A-368." evidence="6">
    <original>S</original>
    <variation>A</variation>
    <location>
        <position position="573"/>
    </location>
</feature>
<feature type="mutagenesis site" description="Decreased ribonuclease activity; when associated with E-368." evidence="6">
    <original>S</original>
    <variation>E</variation>
    <location>
        <position position="573"/>
    </location>
</feature>
<feature type="sequence conflict" description="In Ref. 1; BAA91512." evidence="7" ref="1">
    <original>T</original>
    <variation>A</variation>
    <location>
        <position position="361"/>
    </location>
</feature>
<feature type="strand" evidence="18">
    <location>
        <begin position="11"/>
        <end position="21"/>
    </location>
</feature>
<feature type="helix" evidence="18">
    <location>
        <begin position="25"/>
        <end position="29"/>
    </location>
</feature>
<feature type="helix" evidence="18">
    <location>
        <begin position="34"/>
        <end position="53"/>
    </location>
</feature>
<feature type="strand" evidence="18">
    <location>
        <begin position="57"/>
        <end position="63"/>
    </location>
</feature>
<feature type="strand" evidence="18">
    <location>
        <begin position="65"/>
        <end position="67"/>
    </location>
</feature>
<feature type="helix" evidence="18">
    <location>
        <begin position="70"/>
        <end position="73"/>
    </location>
</feature>
<feature type="helix" evidence="18">
    <location>
        <begin position="77"/>
        <end position="86"/>
    </location>
</feature>
<feature type="helix" evidence="18">
    <location>
        <begin position="90"/>
        <end position="93"/>
    </location>
</feature>
<feature type="strand" evidence="18">
    <location>
        <begin position="94"/>
        <end position="99"/>
    </location>
</feature>
<feature type="strand" evidence="18">
    <location>
        <begin position="102"/>
        <end position="107"/>
    </location>
</feature>
<feature type="strand" evidence="18">
    <location>
        <begin position="127"/>
        <end position="130"/>
    </location>
</feature>
<feature type="strand" evidence="18">
    <location>
        <begin position="133"/>
        <end position="136"/>
    </location>
</feature>
<feature type="helix" evidence="18">
    <location>
        <begin position="139"/>
        <end position="151"/>
    </location>
</feature>
<feature type="helix" evidence="18">
    <location>
        <begin position="174"/>
        <end position="185"/>
    </location>
</feature>
<feature type="strand" evidence="18">
    <location>
        <begin position="188"/>
        <end position="191"/>
    </location>
</feature>
<feature type="strand" evidence="18">
    <location>
        <begin position="204"/>
        <end position="207"/>
    </location>
</feature>
<feature type="helix" evidence="18">
    <location>
        <begin position="211"/>
        <end position="232"/>
    </location>
</feature>
<feature type="strand" evidence="18">
    <location>
        <begin position="235"/>
        <end position="241"/>
    </location>
</feature>
<feature type="strand" evidence="18">
    <location>
        <begin position="245"/>
        <end position="247"/>
    </location>
</feature>
<feature type="helix" evidence="18">
    <location>
        <begin position="254"/>
        <end position="270"/>
    </location>
</feature>
<feature type="strand" evidence="18">
    <location>
        <begin position="277"/>
        <end position="279"/>
    </location>
</feature>
<feature type="strand" evidence="18">
    <location>
        <begin position="285"/>
        <end position="294"/>
    </location>
</feature>
<feature type="strand" evidence="18">
    <location>
        <begin position="297"/>
        <end position="307"/>
    </location>
</feature>
<feature type="strand" evidence="18">
    <location>
        <begin position="311"/>
        <end position="314"/>
    </location>
</feature>
<feature type="strand" evidence="15">
    <location>
        <begin position="316"/>
        <end position="318"/>
    </location>
</feature>
<feature type="strand" evidence="18">
    <location>
        <begin position="322"/>
        <end position="325"/>
    </location>
</feature>
<feature type="strand" evidence="18">
    <location>
        <begin position="328"/>
        <end position="331"/>
    </location>
</feature>
<feature type="helix" evidence="18">
    <location>
        <begin position="334"/>
        <end position="342"/>
    </location>
</feature>
<feature type="helix" evidence="15">
    <location>
        <begin position="351"/>
        <end position="358"/>
    </location>
</feature>
<feature type="helix" evidence="15">
    <location>
        <begin position="359"/>
        <end position="361"/>
    </location>
</feature>
<feature type="strand" evidence="16">
    <location>
        <begin position="371"/>
        <end position="373"/>
    </location>
</feature>
<feature type="strand" evidence="15">
    <location>
        <begin position="381"/>
        <end position="384"/>
    </location>
</feature>
<feature type="strand" evidence="18">
    <location>
        <begin position="388"/>
        <end position="392"/>
    </location>
</feature>
<feature type="helix" evidence="18">
    <location>
        <begin position="393"/>
        <end position="402"/>
    </location>
</feature>
<feature type="helix" evidence="18">
    <location>
        <begin position="404"/>
        <end position="414"/>
    </location>
</feature>
<feature type="strand" evidence="18">
    <location>
        <begin position="418"/>
        <end position="426"/>
    </location>
</feature>
<feature type="helix" evidence="18">
    <location>
        <begin position="428"/>
        <end position="431"/>
    </location>
</feature>
<feature type="strand" evidence="18">
    <location>
        <begin position="440"/>
        <end position="451"/>
    </location>
</feature>
<feature type="strand" evidence="18">
    <location>
        <begin position="454"/>
        <end position="460"/>
    </location>
</feature>
<feature type="helix" evidence="18">
    <location>
        <begin position="467"/>
        <end position="482"/>
    </location>
</feature>
<feature type="turn" evidence="18">
    <location>
        <begin position="483"/>
        <end position="485"/>
    </location>
</feature>
<feature type="strand" evidence="18">
    <location>
        <begin position="494"/>
        <end position="500"/>
    </location>
</feature>
<feature type="strand" evidence="18">
    <location>
        <begin position="506"/>
        <end position="512"/>
    </location>
</feature>
<feature type="turn" evidence="18">
    <location>
        <begin position="513"/>
        <end position="515"/>
    </location>
</feature>
<feature type="helix" evidence="18">
    <location>
        <begin position="520"/>
        <end position="523"/>
    </location>
</feature>
<feature type="helix" evidence="18">
    <location>
        <begin position="527"/>
        <end position="540"/>
    </location>
</feature>
<feature type="strand" evidence="18">
    <location>
        <begin position="545"/>
        <end position="548"/>
    </location>
</feature>
<feature type="helix" evidence="17">
    <location>
        <begin position="552"/>
        <end position="558"/>
    </location>
</feature>
<reference key="1">
    <citation type="journal article" date="2004" name="Nat. Genet.">
        <title>Complete sequencing and characterization of 21,243 full-length human cDNAs.</title>
        <authorList>
            <person name="Ota T."/>
            <person name="Suzuki Y."/>
            <person name="Nishikawa T."/>
            <person name="Otsuki T."/>
            <person name="Sugiyama T."/>
            <person name="Irie R."/>
            <person name="Wakamatsu A."/>
            <person name="Hayashi K."/>
            <person name="Sato H."/>
            <person name="Nagai K."/>
            <person name="Kimura K."/>
            <person name="Makita H."/>
            <person name="Sekine M."/>
            <person name="Obayashi M."/>
            <person name="Nishi T."/>
            <person name="Shibahara T."/>
            <person name="Tanaka T."/>
            <person name="Ishii S."/>
            <person name="Yamamoto J."/>
            <person name="Saito K."/>
            <person name="Kawai Y."/>
            <person name="Isono Y."/>
            <person name="Nakamura Y."/>
            <person name="Nagahari K."/>
            <person name="Murakami K."/>
            <person name="Yasuda T."/>
            <person name="Iwayanagi T."/>
            <person name="Wagatsuma M."/>
            <person name="Shiratori A."/>
            <person name="Sudo H."/>
            <person name="Hosoiri T."/>
            <person name="Kaku Y."/>
            <person name="Kodaira H."/>
            <person name="Kondo H."/>
            <person name="Sugawara M."/>
            <person name="Takahashi M."/>
            <person name="Kanda K."/>
            <person name="Yokoi T."/>
            <person name="Furuya T."/>
            <person name="Kikkawa E."/>
            <person name="Omura Y."/>
            <person name="Abe K."/>
            <person name="Kamihara K."/>
            <person name="Katsuta N."/>
            <person name="Sato K."/>
            <person name="Tanikawa M."/>
            <person name="Yamazaki M."/>
            <person name="Ninomiya K."/>
            <person name="Ishibashi T."/>
            <person name="Yamashita H."/>
            <person name="Murakawa K."/>
            <person name="Fujimori K."/>
            <person name="Tanai H."/>
            <person name="Kimata M."/>
            <person name="Watanabe M."/>
            <person name="Hiraoka S."/>
            <person name="Chiba Y."/>
            <person name="Ishida S."/>
            <person name="Ono Y."/>
            <person name="Takiguchi S."/>
            <person name="Watanabe S."/>
            <person name="Yosida M."/>
            <person name="Hotuta T."/>
            <person name="Kusano J."/>
            <person name="Kanehori K."/>
            <person name="Takahashi-Fujii A."/>
            <person name="Hara H."/>
            <person name="Tanase T.-O."/>
            <person name="Nomura Y."/>
            <person name="Togiya S."/>
            <person name="Komai F."/>
            <person name="Hara R."/>
            <person name="Takeuchi K."/>
            <person name="Arita M."/>
            <person name="Imose N."/>
            <person name="Musashino K."/>
            <person name="Yuuki H."/>
            <person name="Oshima A."/>
            <person name="Sasaki N."/>
            <person name="Aotsuka S."/>
            <person name="Yoshikawa Y."/>
            <person name="Matsunawa H."/>
            <person name="Ichihara T."/>
            <person name="Shiohata N."/>
            <person name="Sano S."/>
            <person name="Moriya S."/>
            <person name="Momiyama H."/>
            <person name="Satoh N."/>
            <person name="Takami S."/>
            <person name="Terashima Y."/>
            <person name="Suzuki O."/>
            <person name="Nakagawa S."/>
            <person name="Senoh A."/>
            <person name="Mizoguchi H."/>
            <person name="Goto Y."/>
            <person name="Shimizu F."/>
            <person name="Wakebe H."/>
            <person name="Hishigaki H."/>
            <person name="Watanabe T."/>
            <person name="Sugiyama A."/>
            <person name="Takemoto M."/>
            <person name="Kawakami B."/>
            <person name="Yamazaki M."/>
            <person name="Watanabe K."/>
            <person name="Kumagai A."/>
            <person name="Itakura S."/>
            <person name="Fukuzumi Y."/>
            <person name="Fujimori Y."/>
            <person name="Komiyama M."/>
            <person name="Tashiro H."/>
            <person name="Tanigami A."/>
            <person name="Fujiwara T."/>
            <person name="Ono T."/>
            <person name="Yamada K."/>
            <person name="Fujii Y."/>
            <person name="Ozaki K."/>
            <person name="Hirao M."/>
            <person name="Ohmori Y."/>
            <person name="Kawabata A."/>
            <person name="Hikiji T."/>
            <person name="Kobatake N."/>
            <person name="Inagaki H."/>
            <person name="Ikema Y."/>
            <person name="Okamoto S."/>
            <person name="Okitani R."/>
            <person name="Kawakami T."/>
            <person name="Noguchi S."/>
            <person name="Itoh T."/>
            <person name="Shigeta K."/>
            <person name="Senba T."/>
            <person name="Matsumura K."/>
            <person name="Nakajima Y."/>
            <person name="Mizuno T."/>
            <person name="Morinaga M."/>
            <person name="Sasaki M."/>
            <person name="Togashi T."/>
            <person name="Oyama M."/>
            <person name="Hata H."/>
            <person name="Watanabe M."/>
            <person name="Komatsu T."/>
            <person name="Mizushima-Sugano J."/>
            <person name="Satoh T."/>
            <person name="Shirai Y."/>
            <person name="Takahashi Y."/>
            <person name="Nakagawa K."/>
            <person name="Okumura K."/>
            <person name="Nagase T."/>
            <person name="Nomura N."/>
            <person name="Kikuchi H."/>
            <person name="Masuho Y."/>
            <person name="Yamashita R."/>
            <person name="Nakai K."/>
            <person name="Yada T."/>
            <person name="Nakamura Y."/>
            <person name="Ohara O."/>
            <person name="Isogai T."/>
            <person name="Sugano S."/>
        </authorList>
    </citation>
    <scope>NUCLEOTIDE SEQUENCE [LARGE SCALE MRNA]</scope>
</reference>
<reference key="2">
    <citation type="journal article" date="2004" name="Genome Res.">
        <title>The status, quality, and expansion of the NIH full-length cDNA project: the Mammalian Gene Collection (MGC).</title>
        <authorList>
            <consortium name="The MGC Project Team"/>
        </authorList>
    </citation>
    <scope>NUCLEOTIDE SEQUENCE [LARGE SCALE MRNA]</scope>
    <scope>VARIANTS ARG-43 AND ARG-168</scope>
    <source>
        <tissue>Brain</tissue>
    </source>
</reference>
<reference key="3">
    <citation type="journal article" date="2018" name="Cell. Physiol. Biochem.">
        <title>Schlafen 12 Interaction with SerpinB12 and Deubiquitylases Drives Human Enterocyte Differentiation.</title>
        <authorList>
            <person name="Basson M.D."/>
            <person name="Wang Q."/>
            <person name="Chaturvedi L.S."/>
            <person name="More S."/>
            <person name="Vomhof-DeKrey E.E."/>
            <person name="Al-Marsoummi S."/>
            <person name="Sun K."/>
            <person name="Kuhn L.A."/>
            <person name="Kovalenko P."/>
            <person name="Kiupel M."/>
        </authorList>
    </citation>
    <scope>FUNCTION</scope>
    <scope>INTERACTION WITH SERPINB12</scope>
    <scope>MUTAGENESIS OF ASP-233</scope>
</reference>
<reference key="4">
    <citation type="journal article" date="2019" name="Mol. Cell">
        <title>Estrogen-Related Hormones Induce Apoptosis by Stabilizing Schlafen-12 Protein Turnover.</title>
        <authorList>
            <person name="Li D."/>
            <person name="Chen J."/>
            <person name="Ai Y."/>
            <person name="Gu X."/>
            <person name="Li L."/>
            <person name="Che D."/>
            <person name="Jiang Z."/>
            <person name="Li L."/>
            <person name="Chen S."/>
            <person name="Huang H."/>
            <person name="Wang J."/>
            <person name="Cai T."/>
            <person name="Cao Y."/>
            <person name="Qi X."/>
            <person name="Wang X."/>
        </authorList>
    </citation>
    <scope>FUNCTION</scope>
    <scope>INTERACTION WITH PDE3A</scope>
    <scope>MUTAGENESIS OF LYS-213</scope>
</reference>
<reference key="5">
    <citation type="journal article" date="2022" name="Cell Chem. Biol.">
        <title>Multiple PDE3A modulators act as molecular glues promoting PDE3A-SLFN12 interaction and induce SLFN12 dephosphorylation and cell death.</title>
        <authorList>
            <person name="Yan B."/>
            <person name="Ding Z."/>
            <person name="Zhang W."/>
            <person name="Cai G."/>
            <person name="Han H."/>
            <person name="Ma Y."/>
            <person name="Cao Y."/>
            <person name="Wang J."/>
            <person name="Chen S."/>
            <person name="Ai Y."/>
        </authorList>
    </citation>
    <scope>FUNCTION</scope>
    <scope>INTERACTION WITH PDE3A</scope>
    <scope>SUBCELLULAR LOCATION</scope>
    <scope>MUTAGENESIS OF SER-368 AND SER-573</scope>
    <scope>PHOSPHORYLATION AT SER-368 AND SER-573</scope>
</reference>
<reference evidence="12 13 14" key="6">
    <citation type="journal article" date="2021" name="Nat. Commun.">
        <title>Structure of PDE3A-SLFN12 complex reveals requirements for activation of SLFN12 RNase.</title>
        <authorList>
            <person name="Garvie C.W."/>
            <person name="Wu X."/>
            <person name="Papanastasiou M."/>
            <person name="Lee S."/>
            <person name="Fuller J."/>
            <person name="Schnitzler G.R."/>
            <person name="Horner S.W."/>
            <person name="Baker A."/>
            <person name="Zhang T."/>
            <person name="Mullahoo J.P."/>
            <person name="Westlake L."/>
            <person name="Hoyt S.H."/>
            <person name="Toetzl M."/>
            <person name="Ranaghan M.J."/>
            <person name="de Waal L."/>
            <person name="McGaunn J."/>
            <person name="Kaplan B."/>
            <person name="Piccioni F."/>
            <person name="Yang X."/>
            <person name="Lange M."/>
            <person name="Tersteegen A."/>
            <person name="Raymond D."/>
            <person name="Lewis T.A."/>
            <person name="Carr S.A."/>
            <person name="Cherniack A.D."/>
            <person name="Lemke C.T."/>
            <person name="Meyerson M."/>
            <person name="Greulich H."/>
        </authorList>
    </citation>
    <scope>X-RAY CRYSTALLOGRAPHY (1.70 ANGSTROMS); STRUCTURE BY ELECTRON MICROSCOPY (2.76 ANGSTROMS) IN COMPLEX WITH PDE3A</scope>
    <scope>FUNCTION</scope>
    <scope>INTERACTION WITH PDE3A</scope>
    <scope>SUBUNIT</scope>
    <scope>REGION</scope>
    <scope>MUTAGENESIS OF GLU-200 AND GLU-205</scope>
</reference>
<reference evidence="10 11" key="7">
    <citation type="journal article" date="2021" name="Nat. Commun.">
        <title>Structure of PDE3A-SLFN12 complex and structure-based design for a potent apoptosis inducer of tumor cells.</title>
        <authorList>
            <person name="Chen J."/>
            <person name="Liu N."/>
            <person name="Huang Y."/>
            <person name="Wang Y."/>
            <person name="Sun Y."/>
            <person name="Wu Q."/>
            <person name="Li D."/>
            <person name="Gao S."/>
            <person name="Wang H.W."/>
            <person name="Huang N."/>
            <person name="Qi X."/>
            <person name="Wang X."/>
        </authorList>
    </citation>
    <scope>STRUCTURE BY ELECTRON MICROSCOPY (3.20 ANGSTROMS) OF 2-568 IN COMPLEX WITH PDE3A</scope>
    <scope>FUNCTION</scope>
</reference>
<gene>
    <name evidence="9" type="primary">SLFN12</name>
</gene>
<sequence length="578" mass="66972">MNISVDLETNYAELVLDVGRVTLGENSRKKMKDCKLRKKQNESVSRAMCALLNSGGGVIKAEIENEDYSYTKDGIGLDLENSFSNILLFVPEYLDFMQNGNYFLIFVKSWSLNTSGLRITTLSSNLYKRDITSAKVMNATAALEFLKDMKKTRGRLYLRPELLAKRPCVDIQEENNMKALAGVFFDRTELDRKEKLTFTESTHVEIKNFSTEKLLQRIKEILPQYVSAFANTDGGYLFIGLNEDKEIIGFKAEMSDLDDLEREIEKSIRKMPVHHFCMEKKKINYSCKFLGVYDKGSLCGYVCALRVERFCCAVFAKEPDSWHVKDNRVMQLTRKEWIQFMVEAEPKFSSSYEEVISQINTSLPAPHSWPLLEWQRQRHHCPGLSGRITYTPENLCRKLFLQHEGLKQLICEEMDSVRKGSLIFSRSWSVDLGLQENHKVLCDALLISQDSPPVLYTFHMVQDEEFKGYSTQTALTLKQKLAKIGGYTKKVCVMTKIFYLSPEGMTSCQYDLRSQVIYPESYYFTRRKYLLKALFKALKRLKSLRDQFSFAENLYQIIGIDCFQKNDKKMFKSCRRLT</sequence>
<evidence type="ECO:0000269" key="1">
    <source>
    </source>
</evidence>
<evidence type="ECO:0000269" key="2">
    <source>
    </source>
</evidence>
<evidence type="ECO:0000269" key="3">
    <source>
    </source>
</evidence>
<evidence type="ECO:0000269" key="4">
    <source>
    </source>
</evidence>
<evidence type="ECO:0000269" key="5">
    <source>
    </source>
</evidence>
<evidence type="ECO:0000269" key="6">
    <source>
    </source>
</evidence>
<evidence type="ECO:0000305" key="7"/>
<evidence type="ECO:0000305" key="8">
    <source>
    </source>
</evidence>
<evidence type="ECO:0000312" key="9">
    <source>
        <dbReference type="HGNC" id="HGNC:25500"/>
    </source>
</evidence>
<evidence type="ECO:0007744" key="10">
    <source>
        <dbReference type="PDB" id="7EG0"/>
    </source>
</evidence>
<evidence type="ECO:0007744" key="11">
    <source>
        <dbReference type="PDB" id="7EG4"/>
    </source>
</evidence>
<evidence type="ECO:0007744" key="12">
    <source>
        <dbReference type="PDB" id="7LRC"/>
    </source>
</evidence>
<evidence type="ECO:0007744" key="13">
    <source>
        <dbReference type="PDB" id="7LRD"/>
    </source>
</evidence>
<evidence type="ECO:0007744" key="14">
    <source>
        <dbReference type="PDB" id="7LRE"/>
    </source>
</evidence>
<evidence type="ECO:0007829" key="15">
    <source>
        <dbReference type="PDB" id="7EG1"/>
    </source>
</evidence>
<evidence type="ECO:0007829" key="16">
    <source>
        <dbReference type="PDB" id="7EG4"/>
    </source>
</evidence>
<evidence type="ECO:0007829" key="17">
    <source>
        <dbReference type="PDB" id="7LRC"/>
    </source>
</evidence>
<evidence type="ECO:0007829" key="18">
    <source>
        <dbReference type="PDB" id="7LRE"/>
    </source>
</evidence>
<comment type="function">
    <text evidence="2 3 4 5 6">Ribonuclease which is part of an E2/17beta-estradiol-induced pro-apoptotic signaling pathway. E2 stabilizes the PDE3A/SLFN12 complex in the cytosol, promoting the dephosphorylation of SLFN12 and activating its pro-apoptotic ribosomal RNA/rRNA ribonuclease activity. This apoptotic pathway might be relevant in tissues with high concentration of E2 and be for instance involved in placenta remodeling (PubMed:31420216, PubMed:34272366, PubMed:34707099, PubMed:35104454). May play a role in cell differentiation (PubMed:30045019).</text>
</comment>
<comment type="subunit">
    <text evidence="2 3 4 5 6">Homodimer (PubMed:34272366). Interacts with PDE3A; direct low affinity interaction which is stimulated by binding of 17beta-estradiol/E2 to PDE3A and that positively regulates the ribonuclease activity of SLFN12 (PubMed:31420216, PubMed:34272366, PubMed:34707099, PubMed:35104454). Interacts with SERPINB12; as part of a pathway regulating cell differentiation (PubMed:30045019).</text>
</comment>
<comment type="interaction">
    <interactant intactId="EBI-2822550">
        <id>Q8IYM2</id>
    </interactant>
    <interactant intactId="EBI-751728">
        <id>P01019</id>
        <label>AGT</label>
    </interactant>
    <organismsDiffer>false</organismsDiffer>
    <experiments>3</experiments>
</comment>
<comment type="interaction">
    <interactant intactId="EBI-2822550">
        <id>Q8IYM2</id>
    </interactant>
    <interactant intactId="EBI-6624398">
        <id>P06307</id>
        <label>CCK</label>
    </interactant>
    <organismsDiffer>false</organismsDiffer>
    <experiments>3</experiments>
</comment>
<comment type="interaction">
    <interactant intactId="EBI-2822550">
        <id>Q8IYM2</id>
    </interactant>
    <interactant intactId="EBI-10087153">
        <id>P03952</id>
        <label>KLKB1</label>
    </interactant>
    <organismsDiffer>false</organismsDiffer>
    <experiments>3</experiments>
</comment>
<comment type="interaction">
    <interactant intactId="EBI-2822550">
        <id>Q8IYM2</id>
    </interactant>
    <interactant intactId="EBI-21591415">
        <id>P13473-2</id>
        <label>LAMP2</label>
    </interactant>
    <organismsDiffer>false</organismsDiffer>
    <experiments>3</experiments>
</comment>
<comment type="interaction">
    <interactant intactId="EBI-2822550">
        <id>Q8IYM2</id>
    </interactant>
    <interactant intactId="EBI-351935">
        <id>P02545</id>
        <label>LMNA</label>
    </interactant>
    <organismsDiffer>false</organismsDiffer>
    <experiments>3</experiments>
</comment>
<comment type="interaction">
    <interactant intactId="EBI-2822550">
        <id>Q8IYM2</id>
    </interactant>
    <interactant intactId="EBI-715909">
        <id>P06858</id>
        <label>LPL</label>
    </interactant>
    <organismsDiffer>false</organismsDiffer>
    <experiments>3</experiments>
</comment>
<comment type="interaction">
    <interactant intactId="EBI-2822550">
        <id>Q8IYM2</id>
    </interactant>
    <interactant intactId="EBI-721769">
        <id>Q9BY11</id>
        <label>PACSIN1</label>
    </interactant>
    <organismsDiffer>false</organismsDiffer>
    <experiments>3</experiments>
</comment>
<comment type="interaction">
    <interactant intactId="EBI-2822550">
        <id>Q8IYM2</id>
    </interactant>
    <interactant intactId="EBI-5280197">
        <id>O75400-2</id>
        <label>PRPF40A</label>
    </interactant>
    <organismsDiffer>false</organismsDiffer>
    <experiments>3</experiments>
</comment>
<comment type="interaction">
    <interactant intactId="EBI-2822550">
        <id>Q8IYM2</id>
    </interactant>
    <interactant intactId="EBI-286642">
        <id>P62826</id>
        <label>RAN</label>
    </interactant>
    <organismsDiffer>false</organismsDiffer>
    <experiments>3</experiments>
</comment>
<comment type="interaction">
    <interactant intactId="EBI-2822550">
        <id>Q8IYM2</id>
    </interactant>
    <interactant intactId="EBI-5235340">
        <id>Q7Z699</id>
        <label>SPRED1</label>
    </interactant>
    <organismsDiffer>false</organismsDiffer>
    <experiments>3</experiments>
</comment>
<comment type="interaction">
    <interactant intactId="EBI-2822550">
        <id>Q8IYM2</id>
    </interactant>
    <interactant intactId="EBI-25912901">
        <id>O15269-2</id>
        <label>SPTLC1</label>
    </interactant>
    <organismsDiffer>false</organismsDiffer>
    <experiments>3</experiments>
</comment>
<comment type="interaction">
    <interactant intactId="EBI-2822550">
        <id>Q8IYM2</id>
    </interactant>
    <interactant intactId="EBI-12806590">
        <id>Q86WV8</id>
        <label>TSC1</label>
    </interactant>
    <organismsDiffer>false</organismsDiffer>
    <experiments>3</experiments>
</comment>
<comment type="interaction">
    <interactant intactId="EBI-2822550">
        <id>Q8IYM2</id>
    </interactant>
    <interactant intactId="EBI-12157263">
        <id>P40337-2</id>
        <label>VHL</label>
    </interactant>
    <organismsDiffer>false</organismsDiffer>
    <experiments>3</experiments>
</comment>
<comment type="interaction">
    <interactant intactId="EBI-2822550">
        <id>Q8IYM2</id>
    </interactant>
    <interactant intactId="EBI-1048893">
        <id>P54577</id>
        <label>YARS1</label>
    </interactant>
    <organismsDiffer>false</organismsDiffer>
    <experiments>3</experiments>
</comment>
<comment type="subcellular location">
    <subcellularLocation>
        <location evidence="6">Nucleus</location>
    </subcellularLocation>
    <subcellularLocation>
        <location evidence="6">Cytoplasm</location>
        <location evidence="6">Cytosol</location>
    </subcellularLocation>
</comment>
<comment type="PTM">
    <text evidence="6">Phosphorylation at Ser-368 and Ser-573 negatively regulates the ribonuclease activity (PubMed:35104454). Dephosphorylation is induced by the interaction with PDE3A and stimulates the rRNA ribonuclease activity (PubMed:35104454).</text>
</comment>
<comment type="similarity">
    <text evidence="7">Belongs to the Schlafen family. Subgroup II subfamily.</text>
</comment>
<accession>Q8IYM2</accession>
<accession>A8K711</accession>
<accession>Q9NP47</accession>
<dbReference type="EC" id="3.1.-.-" evidence="4 6"/>
<dbReference type="EMBL" id="AK001122">
    <property type="protein sequence ID" value="BAA91512.1"/>
    <property type="molecule type" value="mRNA"/>
</dbReference>
<dbReference type="EMBL" id="AK291826">
    <property type="protein sequence ID" value="BAF84515.1"/>
    <property type="molecule type" value="mRNA"/>
</dbReference>
<dbReference type="EMBL" id="BC035605">
    <property type="protein sequence ID" value="AAH35605.1"/>
    <property type="molecule type" value="mRNA"/>
</dbReference>
<dbReference type="CCDS" id="CCDS11295.1"/>
<dbReference type="RefSeq" id="NP_001275938.1">
    <property type="nucleotide sequence ID" value="NM_001289009.2"/>
</dbReference>
<dbReference type="RefSeq" id="NP_060512.3">
    <property type="nucleotide sequence ID" value="NM_018042.4"/>
</dbReference>
<dbReference type="RefSeq" id="XP_005258052.1">
    <property type="nucleotide sequence ID" value="XM_005257995.6"/>
</dbReference>
<dbReference type="RefSeq" id="XP_011523269.1">
    <property type="nucleotide sequence ID" value="XM_011524967.2"/>
</dbReference>
<dbReference type="RefSeq" id="XP_016880298.1">
    <property type="nucleotide sequence ID" value="XM_017024809.1"/>
</dbReference>
<dbReference type="RefSeq" id="XP_016880299.1">
    <property type="nucleotide sequence ID" value="XM_017024810.1"/>
</dbReference>
<dbReference type="RefSeq" id="XP_024306590.1">
    <property type="nucleotide sequence ID" value="XM_024450822.2"/>
</dbReference>
<dbReference type="PDB" id="7EG0">
    <property type="method" value="EM"/>
    <property type="resolution" value="3.40 A"/>
    <property type="chains" value="B/D=2-568"/>
</dbReference>
<dbReference type="PDB" id="7EG1">
    <property type="method" value="EM"/>
    <property type="resolution" value="3.20 A"/>
    <property type="chains" value="B/D=2-568"/>
</dbReference>
<dbReference type="PDB" id="7EG4">
    <property type="method" value="EM"/>
    <property type="resolution" value="3.20 A"/>
    <property type="chains" value="B/D=2-568"/>
</dbReference>
<dbReference type="PDB" id="7LRC">
    <property type="method" value="EM"/>
    <property type="resolution" value="2.97 A"/>
    <property type="chains" value="A/D=1-578"/>
</dbReference>
<dbReference type="PDB" id="7LRD">
    <property type="method" value="EM"/>
    <property type="resolution" value="3.22 A"/>
    <property type="chains" value="A/C=1-578"/>
</dbReference>
<dbReference type="PDB" id="7LRE">
    <property type="method" value="EM"/>
    <property type="resolution" value="2.76 A"/>
    <property type="chains" value="A/B=1-578"/>
</dbReference>
<dbReference type="PDBsum" id="7EG0"/>
<dbReference type="PDBsum" id="7EG1"/>
<dbReference type="PDBsum" id="7EG4"/>
<dbReference type="PDBsum" id="7LRC"/>
<dbReference type="PDBsum" id="7LRD"/>
<dbReference type="PDBsum" id="7LRE"/>
<dbReference type="EMDB" id="EMD-23494"/>
<dbReference type="EMDB" id="EMD-23495"/>
<dbReference type="EMDB" id="EMD-23496"/>
<dbReference type="EMDB" id="EMD-31103"/>
<dbReference type="EMDB" id="EMD-31104"/>
<dbReference type="EMDB" id="EMD-31105"/>
<dbReference type="SMR" id="Q8IYM2"/>
<dbReference type="BioGRID" id="120416">
    <property type="interactions" value="7"/>
</dbReference>
<dbReference type="CORUM" id="Q8IYM2"/>
<dbReference type="FunCoup" id="Q8IYM2">
    <property type="interactions" value="233"/>
</dbReference>
<dbReference type="IntAct" id="Q8IYM2">
    <property type="interactions" value="21"/>
</dbReference>
<dbReference type="MINT" id="Q8IYM2"/>
<dbReference type="STRING" id="9606.ENSP00000378063"/>
<dbReference type="BindingDB" id="Q8IYM2"/>
<dbReference type="ChEMBL" id="CHEMBL5291543"/>
<dbReference type="iPTMnet" id="Q8IYM2"/>
<dbReference type="PhosphoSitePlus" id="Q8IYM2"/>
<dbReference type="BioMuta" id="SLFN12"/>
<dbReference type="DMDM" id="143585256"/>
<dbReference type="jPOST" id="Q8IYM2"/>
<dbReference type="MassIVE" id="Q8IYM2"/>
<dbReference type="PaxDb" id="9606-ENSP00000378063"/>
<dbReference type="PeptideAtlas" id="Q8IYM2"/>
<dbReference type="ProteomicsDB" id="71204"/>
<dbReference type="Antibodypedia" id="43970">
    <property type="antibodies" value="124 antibodies from 25 providers"/>
</dbReference>
<dbReference type="DNASU" id="55106"/>
<dbReference type="Ensembl" id="ENST00000304905.10">
    <property type="protein sequence ID" value="ENSP00000302077.5"/>
    <property type="gene ID" value="ENSG00000172123.14"/>
</dbReference>
<dbReference type="Ensembl" id="ENST00000394562.5">
    <property type="protein sequence ID" value="ENSP00000378063.1"/>
    <property type="gene ID" value="ENSG00000172123.14"/>
</dbReference>
<dbReference type="Ensembl" id="ENST00000445092.6">
    <property type="protein sequence ID" value="ENSP00000404175.2"/>
    <property type="gene ID" value="ENSG00000172123.14"/>
</dbReference>
<dbReference type="Ensembl" id="ENST00000447040.7">
    <property type="protein sequence ID" value="ENSP00000398315.3"/>
    <property type="gene ID" value="ENSG00000172123.14"/>
</dbReference>
<dbReference type="Ensembl" id="ENST00000452764.3">
    <property type="protein sequence ID" value="ENSP00000394903.2"/>
    <property type="gene ID" value="ENSG00000172123.14"/>
</dbReference>
<dbReference type="Ensembl" id="ENST00000714254.1">
    <property type="protein sequence ID" value="ENSP00000519535.1"/>
    <property type="gene ID" value="ENSG00000172123.14"/>
</dbReference>
<dbReference type="Ensembl" id="ENST00000714255.1">
    <property type="protein sequence ID" value="ENSP00000519536.1"/>
    <property type="gene ID" value="ENSG00000172123.14"/>
</dbReference>
<dbReference type="GeneID" id="55106"/>
<dbReference type="KEGG" id="hsa:55106"/>
<dbReference type="MANE-Select" id="ENST00000304905.10">
    <property type="protein sequence ID" value="ENSP00000302077.5"/>
    <property type="RefSeq nucleotide sequence ID" value="NM_018042.5"/>
    <property type="RefSeq protein sequence ID" value="NP_060512.3"/>
</dbReference>
<dbReference type="UCSC" id="uc002hji.6">
    <property type="organism name" value="human"/>
</dbReference>
<dbReference type="AGR" id="HGNC:25500"/>
<dbReference type="CTD" id="55106"/>
<dbReference type="DisGeNET" id="55106"/>
<dbReference type="GeneCards" id="SLFN12"/>
<dbReference type="HGNC" id="HGNC:25500">
    <property type="gene designation" value="SLFN12"/>
</dbReference>
<dbReference type="HPA" id="ENSG00000172123">
    <property type="expression patterns" value="Low tissue specificity"/>
</dbReference>
<dbReference type="MIM" id="614955">
    <property type="type" value="gene"/>
</dbReference>
<dbReference type="neXtProt" id="NX_Q8IYM2"/>
<dbReference type="OpenTargets" id="ENSG00000172123"/>
<dbReference type="PharmGKB" id="PA144596359"/>
<dbReference type="VEuPathDB" id="HostDB:ENSG00000172123"/>
<dbReference type="eggNOG" id="ENOG502RU3F">
    <property type="taxonomic scope" value="Eukaryota"/>
</dbReference>
<dbReference type="GeneTree" id="ENSGT00410000025651"/>
<dbReference type="HOGENOM" id="CLU_034558_0_0_1"/>
<dbReference type="InParanoid" id="Q8IYM2"/>
<dbReference type="OMA" id="CMEKKNI"/>
<dbReference type="OrthoDB" id="6052143at2759"/>
<dbReference type="PAN-GO" id="Q8IYM2">
    <property type="GO annotations" value="0 GO annotations based on evolutionary models"/>
</dbReference>
<dbReference type="PhylomeDB" id="Q8IYM2"/>
<dbReference type="TreeFam" id="TF337168"/>
<dbReference type="PathwayCommons" id="Q8IYM2"/>
<dbReference type="SignaLink" id="Q8IYM2"/>
<dbReference type="BioGRID-ORCS" id="55106">
    <property type="hits" value="12 hits in 1149 CRISPR screens"/>
</dbReference>
<dbReference type="ChiTaRS" id="SLFN12">
    <property type="organism name" value="human"/>
</dbReference>
<dbReference type="GenomeRNAi" id="55106"/>
<dbReference type="Pharos" id="Q8IYM2">
    <property type="development level" value="Tbio"/>
</dbReference>
<dbReference type="PRO" id="PR:Q8IYM2"/>
<dbReference type="Proteomes" id="UP000005640">
    <property type="component" value="Chromosome 17"/>
</dbReference>
<dbReference type="RNAct" id="Q8IYM2">
    <property type="molecule type" value="protein"/>
</dbReference>
<dbReference type="Bgee" id="ENSG00000172123">
    <property type="expression patterns" value="Expressed in monocyte and 117 other cell types or tissues"/>
</dbReference>
<dbReference type="ExpressionAtlas" id="Q8IYM2">
    <property type="expression patterns" value="baseline and differential"/>
</dbReference>
<dbReference type="GO" id="GO:0005829">
    <property type="term" value="C:cytosol"/>
    <property type="evidence" value="ECO:0000314"/>
    <property type="project" value="UniProtKB"/>
</dbReference>
<dbReference type="GO" id="GO:0005634">
    <property type="term" value="C:nucleus"/>
    <property type="evidence" value="ECO:0000314"/>
    <property type="project" value="UniProtKB"/>
</dbReference>
<dbReference type="GO" id="GO:0043022">
    <property type="term" value="F:ribosome binding"/>
    <property type="evidence" value="ECO:0000314"/>
    <property type="project" value="UniProtKB"/>
</dbReference>
<dbReference type="GO" id="GO:0004540">
    <property type="term" value="F:RNA nuclease activity"/>
    <property type="evidence" value="ECO:0000314"/>
    <property type="project" value="UniProtKB"/>
</dbReference>
<dbReference type="GO" id="GO:0097190">
    <property type="term" value="P:apoptotic signaling pathway"/>
    <property type="evidence" value="ECO:0000315"/>
    <property type="project" value="UniProtKB"/>
</dbReference>
<dbReference type="GO" id="GO:0016075">
    <property type="term" value="P:rRNA catabolic process"/>
    <property type="evidence" value="ECO:0000314"/>
    <property type="project" value="UniProtKB"/>
</dbReference>
<dbReference type="FunFam" id="3.30.950.30:FF:000001">
    <property type="entry name" value="Schlafen family member 14"/>
    <property type="match status" value="1"/>
</dbReference>
<dbReference type="Gene3D" id="3.30.950.30">
    <property type="entry name" value="Schlafen, AAA domain"/>
    <property type="match status" value="1"/>
</dbReference>
<dbReference type="InterPro" id="IPR031450">
    <property type="entry name" value="Poxin-SLFN/SLFN_N"/>
</dbReference>
<dbReference type="InterPro" id="IPR029684">
    <property type="entry name" value="Schlafen"/>
</dbReference>
<dbReference type="InterPro" id="IPR007421">
    <property type="entry name" value="Schlafen_AlbA_2_dom"/>
</dbReference>
<dbReference type="InterPro" id="IPR038461">
    <property type="entry name" value="Schlafen_AlbA_2_dom_sf"/>
</dbReference>
<dbReference type="InterPro" id="IPR048729">
    <property type="entry name" value="SLFN_GTPase-like"/>
</dbReference>
<dbReference type="PANTHER" id="PTHR12155:SF2">
    <property type="entry name" value="RIBONUCLEASE SLFN12"/>
    <property type="match status" value="1"/>
</dbReference>
<dbReference type="PANTHER" id="PTHR12155">
    <property type="entry name" value="SCHLAFEN"/>
    <property type="match status" value="1"/>
</dbReference>
<dbReference type="Pfam" id="PF17057">
    <property type="entry name" value="B3R"/>
    <property type="match status" value="1"/>
</dbReference>
<dbReference type="Pfam" id="PF04326">
    <property type="entry name" value="SLFN_AlbA_2"/>
    <property type="match status" value="1"/>
</dbReference>
<dbReference type="Pfam" id="PF21026">
    <property type="entry name" value="SLFN_GTPase-like"/>
    <property type="match status" value="1"/>
</dbReference>
<keyword id="KW-0002">3D-structure</keyword>
<keyword id="KW-0963">Cytoplasm</keyword>
<keyword id="KW-0378">Hydrolase</keyword>
<keyword id="KW-0539">Nucleus</keyword>
<keyword id="KW-0597">Phosphoprotein</keyword>
<keyword id="KW-1267">Proteomics identification</keyword>
<keyword id="KW-1185">Reference proteome</keyword>
<organism>
    <name type="scientific">Homo sapiens</name>
    <name type="common">Human</name>
    <dbReference type="NCBI Taxonomy" id="9606"/>
    <lineage>
        <taxon>Eukaryota</taxon>
        <taxon>Metazoa</taxon>
        <taxon>Chordata</taxon>
        <taxon>Craniata</taxon>
        <taxon>Vertebrata</taxon>
        <taxon>Euteleostomi</taxon>
        <taxon>Mammalia</taxon>
        <taxon>Eutheria</taxon>
        <taxon>Euarchontoglires</taxon>
        <taxon>Primates</taxon>
        <taxon>Haplorrhini</taxon>
        <taxon>Catarrhini</taxon>
        <taxon>Hominidae</taxon>
        <taxon>Homo</taxon>
    </lineage>
</organism>
<protein>
    <recommendedName>
        <fullName evidence="8">Ribonuclease SLFN12</fullName>
        <ecNumber evidence="4 6">3.1.-.-</ecNumber>
    </recommendedName>
    <alternativeName>
        <fullName evidence="9">Schlafen family member 12</fullName>
    </alternativeName>
</protein>